<comment type="function">
    <text evidence="1">Involved in the regulation of the intracellular balance of NAD and NADP, and is a key enzyme in the biosynthesis of NADP. Catalyzes specifically the phosphorylation on 2'-hydroxyl of the adenosine moiety of NAD to yield NADP.</text>
</comment>
<comment type="catalytic activity">
    <reaction evidence="1">
        <text>NAD(+) + ATP = ADP + NADP(+) + H(+)</text>
        <dbReference type="Rhea" id="RHEA:18629"/>
        <dbReference type="ChEBI" id="CHEBI:15378"/>
        <dbReference type="ChEBI" id="CHEBI:30616"/>
        <dbReference type="ChEBI" id="CHEBI:57540"/>
        <dbReference type="ChEBI" id="CHEBI:58349"/>
        <dbReference type="ChEBI" id="CHEBI:456216"/>
        <dbReference type="EC" id="2.7.1.23"/>
    </reaction>
</comment>
<comment type="cofactor">
    <cofactor evidence="1">
        <name>a divalent metal cation</name>
        <dbReference type="ChEBI" id="CHEBI:60240"/>
    </cofactor>
</comment>
<comment type="subcellular location">
    <subcellularLocation>
        <location evidence="1">Cytoplasm</location>
    </subcellularLocation>
</comment>
<comment type="similarity">
    <text evidence="1">Belongs to the NAD kinase family.</text>
</comment>
<feature type="chain" id="PRO_0000120657" description="NAD kinase">
    <location>
        <begin position="1"/>
        <end position="292"/>
    </location>
</feature>
<feature type="active site" description="Proton acceptor" evidence="1">
    <location>
        <position position="73"/>
    </location>
</feature>
<feature type="binding site" evidence="1">
    <location>
        <begin position="73"/>
        <end position="74"/>
    </location>
    <ligand>
        <name>NAD(+)</name>
        <dbReference type="ChEBI" id="CHEBI:57540"/>
    </ligand>
</feature>
<feature type="binding site" evidence="1">
    <location>
        <begin position="147"/>
        <end position="148"/>
    </location>
    <ligand>
        <name>NAD(+)</name>
        <dbReference type="ChEBI" id="CHEBI:57540"/>
    </ligand>
</feature>
<feature type="binding site" evidence="1">
    <location>
        <position position="158"/>
    </location>
    <ligand>
        <name>NAD(+)</name>
        <dbReference type="ChEBI" id="CHEBI:57540"/>
    </ligand>
</feature>
<feature type="binding site" evidence="1">
    <location>
        <position position="175"/>
    </location>
    <ligand>
        <name>NAD(+)</name>
        <dbReference type="ChEBI" id="CHEBI:57540"/>
    </ligand>
</feature>
<feature type="binding site" evidence="1">
    <location>
        <position position="177"/>
    </location>
    <ligand>
        <name>NAD(+)</name>
        <dbReference type="ChEBI" id="CHEBI:57540"/>
    </ligand>
</feature>
<feature type="binding site" evidence="1">
    <location>
        <begin position="188"/>
        <end position="193"/>
    </location>
    <ligand>
        <name>NAD(+)</name>
        <dbReference type="ChEBI" id="CHEBI:57540"/>
    </ligand>
</feature>
<feature type="binding site" evidence="1">
    <location>
        <position position="247"/>
    </location>
    <ligand>
        <name>NAD(+)</name>
        <dbReference type="ChEBI" id="CHEBI:57540"/>
    </ligand>
</feature>
<proteinExistence type="inferred from homology"/>
<organism>
    <name type="scientific">Shigella flexneri</name>
    <dbReference type="NCBI Taxonomy" id="623"/>
    <lineage>
        <taxon>Bacteria</taxon>
        <taxon>Pseudomonadati</taxon>
        <taxon>Pseudomonadota</taxon>
        <taxon>Gammaproteobacteria</taxon>
        <taxon>Enterobacterales</taxon>
        <taxon>Enterobacteriaceae</taxon>
        <taxon>Shigella</taxon>
    </lineage>
</organism>
<gene>
    <name evidence="1" type="primary">nadK</name>
    <name type="ordered locus">SF2674</name>
    <name type="ordered locus">S2852</name>
</gene>
<dbReference type="EC" id="2.7.1.23" evidence="1"/>
<dbReference type="EMBL" id="AE005674">
    <property type="protein sequence ID" value="AAN44169.1"/>
    <property type="molecule type" value="Genomic_DNA"/>
</dbReference>
<dbReference type="EMBL" id="AE014073">
    <property type="protein sequence ID" value="AAP17994.1"/>
    <property type="molecule type" value="Genomic_DNA"/>
</dbReference>
<dbReference type="RefSeq" id="WP_001059169.1">
    <property type="nucleotide sequence ID" value="NZ_WPGW01000074.1"/>
</dbReference>
<dbReference type="SMR" id="P0A7B4"/>
<dbReference type="STRING" id="198214.SF2674"/>
<dbReference type="PaxDb" id="198214-SF2674"/>
<dbReference type="GeneID" id="93774464"/>
<dbReference type="KEGG" id="sfl:SF2674"/>
<dbReference type="KEGG" id="sfx:S2852"/>
<dbReference type="PATRIC" id="fig|198214.7.peg.3184"/>
<dbReference type="HOGENOM" id="CLU_008831_0_1_6"/>
<dbReference type="Proteomes" id="UP000001006">
    <property type="component" value="Chromosome"/>
</dbReference>
<dbReference type="Proteomes" id="UP000002673">
    <property type="component" value="Chromosome"/>
</dbReference>
<dbReference type="GO" id="GO:0005737">
    <property type="term" value="C:cytoplasm"/>
    <property type="evidence" value="ECO:0007669"/>
    <property type="project" value="UniProtKB-SubCell"/>
</dbReference>
<dbReference type="GO" id="GO:0005524">
    <property type="term" value="F:ATP binding"/>
    <property type="evidence" value="ECO:0007669"/>
    <property type="project" value="UniProtKB-KW"/>
</dbReference>
<dbReference type="GO" id="GO:0046872">
    <property type="term" value="F:metal ion binding"/>
    <property type="evidence" value="ECO:0007669"/>
    <property type="project" value="UniProtKB-UniRule"/>
</dbReference>
<dbReference type="GO" id="GO:0051287">
    <property type="term" value="F:NAD binding"/>
    <property type="evidence" value="ECO:0007669"/>
    <property type="project" value="UniProtKB-ARBA"/>
</dbReference>
<dbReference type="GO" id="GO:0003951">
    <property type="term" value="F:NAD+ kinase activity"/>
    <property type="evidence" value="ECO:0007669"/>
    <property type="project" value="UniProtKB-UniRule"/>
</dbReference>
<dbReference type="GO" id="GO:0019674">
    <property type="term" value="P:NAD metabolic process"/>
    <property type="evidence" value="ECO:0007669"/>
    <property type="project" value="InterPro"/>
</dbReference>
<dbReference type="GO" id="GO:0006741">
    <property type="term" value="P:NADP biosynthetic process"/>
    <property type="evidence" value="ECO:0007669"/>
    <property type="project" value="UniProtKB-UniRule"/>
</dbReference>
<dbReference type="FunFam" id="2.60.200.30:FF:000001">
    <property type="entry name" value="NAD kinase"/>
    <property type="match status" value="1"/>
</dbReference>
<dbReference type="FunFam" id="3.40.50.10330:FF:000004">
    <property type="entry name" value="NAD kinase"/>
    <property type="match status" value="1"/>
</dbReference>
<dbReference type="Gene3D" id="3.40.50.10330">
    <property type="entry name" value="Probable inorganic polyphosphate/atp-NAD kinase, domain 1"/>
    <property type="match status" value="1"/>
</dbReference>
<dbReference type="Gene3D" id="2.60.200.30">
    <property type="entry name" value="Probable inorganic polyphosphate/atp-NAD kinase, domain 2"/>
    <property type="match status" value="1"/>
</dbReference>
<dbReference type="HAMAP" id="MF_00361">
    <property type="entry name" value="NAD_kinase"/>
    <property type="match status" value="1"/>
</dbReference>
<dbReference type="InterPro" id="IPR017438">
    <property type="entry name" value="ATP-NAD_kinase_N"/>
</dbReference>
<dbReference type="InterPro" id="IPR017437">
    <property type="entry name" value="ATP-NAD_kinase_PpnK-typ_C"/>
</dbReference>
<dbReference type="InterPro" id="IPR016064">
    <property type="entry name" value="NAD/diacylglycerol_kinase_sf"/>
</dbReference>
<dbReference type="InterPro" id="IPR002504">
    <property type="entry name" value="NADK"/>
</dbReference>
<dbReference type="NCBIfam" id="NF002306">
    <property type="entry name" value="PRK01231.1"/>
    <property type="match status" value="1"/>
</dbReference>
<dbReference type="NCBIfam" id="NF002893">
    <property type="entry name" value="PRK03378.1"/>
    <property type="match status" value="1"/>
</dbReference>
<dbReference type="PANTHER" id="PTHR20275">
    <property type="entry name" value="NAD KINASE"/>
    <property type="match status" value="1"/>
</dbReference>
<dbReference type="PANTHER" id="PTHR20275:SF0">
    <property type="entry name" value="NAD KINASE"/>
    <property type="match status" value="1"/>
</dbReference>
<dbReference type="Pfam" id="PF01513">
    <property type="entry name" value="NAD_kinase"/>
    <property type="match status" value="1"/>
</dbReference>
<dbReference type="Pfam" id="PF20143">
    <property type="entry name" value="NAD_kinase_C"/>
    <property type="match status" value="1"/>
</dbReference>
<dbReference type="SUPFAM" id="SSF111331">
    <property type="entry name" value="NAD kinase/diacylglycerol kinase-like"/>
    <property type="match status" value="1"/>
</dbReference>
<reference key="1">
    <citation type="journal article" date="2002" name="Nucleic Acids Res.">
        <title>Genome sequence of Shigella flexneri 2a: insights into pathogenicity through comparison with genomes of Escherichia coli K12 and O157.</title>
        <authorList>
            <person name="Jin Q."/>
            <person name="Yuan Z."/>
            <person name="Xu J."/>
            <person name="Wang Y."/>
            <person name="Shen Y."/>
            <person name="Lu W."/>
            <person name="Wang J."/>
            <person name="Liu H."/>
            <person name="Yang J."/>
            <person name="Yang F."/>
            <person name="Zhang X."/>
            <person name="Zhang J."/>
            <person name="Yang G."/>
            <person name="Wu H."/>
            <person name="Qu D."/>
            <person name="Dong J."/>
            <person name="Sun L."/>
            <person name="Xue Y."/>
            <person name="Zhao A."/>
            <person name="Gao Y."/>
            <person name="Zhu J."/>
            <person name="Kan B."/>
            <person name="Ding K."/>
            <person name="Chen S."/>
            <person name="Cheng H."/>
            <person name="Yao Z."/>
            <person name="He B."/>
            <person name="Chen R."/>
            <person name="Ma D."/>
            <person name="Qiang B."/>
            <person name="Wen Y."/>
            <person name="Hou Y."/>
            <person name="Yu J."/>
        </authorList>
    </citation>
    <scope>NUCLEOTIDE SEQUENCE [LARGE SCALE GENOMIC DNA]</scope>
    <source>
        <strain>301 / Serotype 2a</strain>
    </source>
</reference>
<reference key="2">
    <citation type="journal article" date="2003" name="Infect. Immun.">
        <title>Complete genome sequence and comparative genomics of Shigella flexneri serotype 2a strain 2457T.</title>
        <authorList>
            <person name="Wei J."/>
            <person name="Goldberg M.B."/>
            <person name="Burland V."/>
            <person name="Venkatesan M.M."/>
            <person name="Deng W."/>
            <person name="Fournier G."/>
            <person name="Mayhew G.F."/>
            <person name="Plunkett G. III"/>
            <person name="Rose D.J."/>
            <person name="Darling A."/>
            <person name="Mau B."/>
            <person name="Perna N.T."/>
            <person name="Payne S.M."/>
            <person name="Runyen-Janecky L.J."/>
            <person name="Zhou S."/>
            <person name="Schwartz D.C."/>
            <person name="Blattner F.R."/>
        </authorList>
    </citation>
    <scope>NUCLEOTIDE SEQUENCE [LARGE SCALE GENOMIC DNA]</scope>
    <source>
        <strain>ATCC 700930 / 2457T / Serotype 2a</strain>
    </source>
</reference>
<evidence type="ECO:0000255" key="1">
    <source>
        <dbReference type="HAMAP-Rule" id="MF_00361"/>
    </source>
</evidence>
<accession>P0A7B4</accession>
<accession>P37768</accession>
<accession>P46140</accession>
<accession>P77490</accession>
<sequence>MNNHFKCIGIVGHPRHPTALTTHEMLYRWLCTKGYEVIVEQQIAHELQLKNVKTGTLAEIGQLADLAVVVGGDGNMLGAARTLARYDIKVIGINRGNLGFLTDLDPDNAQQQLADVLEGHYISEKRFLLEAQVCQQDCQKRISTAINEVVLHPGKVAHMIEFEVYIDEIFAFSQRSDGLIISTPTGSTAYSLSAGGPILTPSLDAITLVPMFPHTLSARPLVINSSSTIRLRFSHRRNDLEISCDSQIALPIQEGEDVLIRRCDYHLNLIHPKDYSYFNTLSTKLGWSKKLF</sequence>
<protein>
    <recommendedName>
        <fullName evidence="1">NAD kinase</fullName>
        <ecNumber evidence="1">2.7.1.23</ecNumber>
    </recommendedName>
    <alternativeName>
        <fullName evidence="1">ATP-dependent NAD kinase</fullName>
    </alternativeName>
</protein>
<name>NADK_SHIFL</name>
<keyword id="KW-0067">ATP-binding</keyword>
<keyword id="KW-0963">Cytoplasm</keyword>
<keyword id="KW-0418">Kinase</keyword>
<keyword id="KW-0520">NAD</keyword>
<keyword id="KW-0521">NADP</keyword>
<keyword id="KW-0547">Nucleotide-binding</keyword>
<keyword id="KW-1185">Reference proteome</keyword>
<keyword id="KW-0808">Transferase</keyword>